<keyword id="KW-1185">Reference proteome</keyword>
<name>Y5168_DICDI</name>
<protein>
    <recommendedName>
        <fullName>Uncharacterized protein DDB_G0295473</fullName>
    </recommendedName>
</protein>
<reference key="1">
    <citation type="journal article" date="2005" name="Nature">
        <title>The genome of the social amoeba Dictyostelium discoideum.</title>
        <authorList>
            <person name="Eichinger L."/>
            <person name="Pachebat J.A."/>
            <person name="Gloeckner G."/>
            <person name="Rajandream M.A."/>
            <person name="Sucgang R."/>
            <person name="Berriman M."/>
            <person name="Song J."/>
            <person name="Olsen R."/>
            <person name="Szafranski K."/>
            <person name="Xu Q."/>
            <person name="Tunggal B."/>
            <person name="Kummerfeld S."/>
            <person name="Madera M."/>
            <person name="Konfortov B.A."/>
            <person name="Rivero F."/>
            <person name="Bankier A.T."/>
            <person name="Lehmann R."/>
            <person name="Hamlin N."/>
            <person name="Davies R."/>
            <person name="Gaudet P."/>
            <person name="Fey P."/>
            <person name="Pilcher K."/>
            <person name="Chen G."/>
            <person name="Saunders D."/>
            <person name="Sodergren E.J."/>
            <person name="Davis P."/>
            <person name="Kerhornou A."/>
            <person name="Nie X."/>
            <person name="Hall N."/>
            <person name="Anjard C."/>
            <person name="Hemphill L."/>
            <person name="Bason N."/>
            <person name="Farbrother P."/>
            <person name="Desany B."/>
            <person name="Just E."/>
            <person name="Morio T."/>
            <person name="Rost R."/>
            <person name="Churcher C.M."/>
            <person name="Cooper J."/>
            <person name="Haydock S."/>
            <person name="van Driessche N."/>
            <person name="Cronin A."/>
            <person name="Goodhead I."/>
            <person name="Muzny D.M."/>
            <person name="Mourier T."/>
            <person name="Pain A."/>
            <person name="Lu M."/>
            <person name="Harper D."/>
            <person name="Lindsay R."/>
            <person name="Hauser H."/>
            <person name="James K.D."/>
            <person name="Quiles M."/>
            <person name="Madan Babu M."/>
            <person name="Saito T."/>
            <person name="Buchrieser C."/>
            <person name="Wardroper A."/>
            <person name="Felder M."/>
            <person name="Thangavelu M."/>
            <person name="Johnson D."/>
            <person name="Knights A."/>
            <person name="Loulseged H."/>
            <person name="Mungall K.L."/>
            <person name="Oliver K."/>
            <person name="Price C."/>
            <person name="Quail M.A."/>
            <person name="Urushihara H."/>
            <person name="Hernandez J."/>
            <person name="Rabbinowitsch E."/>
            <person name="Steffen D."/>
            <person name="Sanders M."/>
            <person name="Ma J."/>
            <person name="Kohara Y."/>
            <person name="Sharp S."/>
            <person name="Simmonds M.N."/>
            <person name="Spiegler S."/>
            <person name="Tivey A."/>
            <person name="Sugano S."/>
            <person name="White B."/>
            <person name="Walker D."/>
            <person name="Woodward J.R."/>
            <person name="Winckler T."/>
            <person name="Tanaka Y."/>
            <person name="Shaulsky G."/>
            <person name="Schleicher M."/>
            <person name="Weinstock G.M."/>
            <person name="Rosenthal A."/>
            <person name="Cox E.C."/>
            <person name="Chisholm R.L."/>
            <person name="Gibbs R.A."/>
            <person name="Loomis W.F."/>
            <person name="Platzer M."/>
            <person name="Kay R.R."/>
            <person name="Williams J.G."/>
            <person name="Dear P.H."/>
            <person name="Noegel A.A."/>
            <person name="Barrell B.G."/>
            <person name="Kuspa A."/>
        </authorList>
    </citation>
    <scope>NUCLEOTIDE SEQUENCE [LARGE SCALE GENOMIC DNA]</scope>
    <source>
        <strain>AX4</strain>
    </source>
</reference>
<gene>
    <name type="ORF">DDB_G0295473</name>
</gene>
<evidence type="ECO:0000256" key="1">
    <source>
        <dbReference type="SAM" id="MobiDB-lite"/>
    </source>
</evidence>
<sequence>MFGFIYRDPSPAPQGKIRDGSKDPKTPGGGGGGGGGISPNGGAPLGGKGFSM</sequence>
<feature type="chain" id="PRO_0000343906" description="Uncharacterized protein DDB_G0295473">
    <location>
        <begin position="1"/>
        <end position="52"/>
    </location>
</feature>
<feature type="region of interest" description="Disordered" evidence="1">
    <location>
        <begin position="1"/>
        <end position="52"/>
    </location>
</feature>
<feature type="compositionally biased region" description="Basic and acidic residues" evidence="1">
    <location>
        <begin position="16"/>
        <end position="25"/>
    </location>
</feature>
<feature type="compositionally biased region" description="Gly residues" evidence="1">
    <location>
        <begin position="27"/>
        <end position="52"/>
    </location>
</feature>
<organism>
    <name type="scientific">Dictyostelium discoideum</name>
    <name type="common">Social amoeba</name>
    <dbReference type="NCBI Taxonomy" id="44689"/>
    <lineage>
        <taxon>Eukaryota</taxon>
        <taxon>Amoebozoa</taxon>
        <taxon>Evosea</taxon>
        <taxon>Eumycetozoa</taxon>
        <taxon>Dictyostelia</taxon>
        <taxon>Dictyosteliales</taxon>
        <taxon>Dictyosteliaceae</taxon>
        <taxon>Dictyostelium</taxon>
    </lineage>
</organism>
<dbReference type="EMBL" id="AAFI02000026">
    <property type="protein sequence ID" value="EDR41083.1"/>
    <property type="molecule type" value="Genomic_DNA"/>
</dbReference>
<dbReference type="RefSeq" id="XP_001732987.1">
    <property type="nucleotide sequence ID" value="XM_001732935.1"/>
</dbReference>
<dbReference type="PaxDb" id="44689-DDB0235168"/>
<dbReference type="EnsemblProtists" id="EDR41083">
    <property type="protein sequence ID" value="EDR41083"/>
    <property type="gene ID" value="DDB_G0295473"/>
</dbReference>
<dbReference type="GeneID" id="8621846"/>
<dbReference type="KEGG" id="ddi:DDB_G0295473"/>
<dbReference type="dictyBase" id="DDB_G0295473"/>
<dbReference type="HOGENOM" id="CLU_3091301_0_0_1"/>
<dbReference type="InParanoid" id="B0G125"/>
<dbReference type="PRO" id="PR:B0G125"/>
<dbReference type="Proteomes" id="UP000002195">
    <property type="component" value="Chromosome 3"/>
</dbReference>
<proteinExistence type="predicted"/>
<accession>B0G125</accession>